<name>VM3AL_TRIAB</name>
<organism>
    <name type="scientific">Trimeresurus albolabris</name>
    <name type="common">White-lipped pit viper</name>
    <name type="synonym">Cryptelytrops albolabris</name>
    <dbReference type="NCBI Taxonomy" id="8765"/>
    <lineage>
        <taxon>Eukaryota</taxon>
        <taxon>Metazoa</taxon>
        <taxon>Chordata</taxon>
        <taxon>Craniata</taxon>
        <taxon>Vertebrata</taxon>
        <taxon>Euteleostomi</taxon>
        <taxon>Lepidosauria</taxon>
        <taxon>Squamata</taxon>
        <taxon>Bifurcata</taxon>
        <taxon>Unidentata</taxon>
        <taxon>Episquamata</taxon>
        <taxon>Toxicofera</taxon>
        <taxon>Serpentes</taxon>
        <taxon>Colubroidea</taxon>
        <taxon>Viperidae</taxon>
        <taxon>Crotalinae</taxon>
        <taxon>Trimeresurus</taxon>
    </lineage>
</organism>
<dbReference type="EC" id="3.4.24.-"/>
<dbReference type="GO" id="GO:0005576">
    <property type="term" value="C:extracellular region"/>
    <property type="evidence" value="ECO:0007669"/>
    <property type="project" value="UniProtKB-SubCell"/>
</dbReference>
<dbReference type="GO" id="GO:0046872">
    <property type="term" value="F:metal ion binding"/>
    <property type="evidence" value="ECO:0007669"/>
    <property type="project" value="UniProtKB-KW"/>
</dbReference>
<dbReference type="GO" id="GO:0008237">
    <property type="term" value="F:metallopeptidase activity"/>
    <property type="evidence" value="ECO:0007669"/>
    <property type="project" value="UniProtKB-KW"/>
</dbReference>
<dbReference type="GO" id="GO:0090729">
    <property type="term" value="F:toxin activity"/>
    <property type="evidence" value="ECO:0007669"/>
    <property type="project" value="UniProtKB-KW"/>
</dbReference>
<dbReference type="GO" id="GO:0006508">
    <property type="term" value="P:proteolysis"/>
    <property type="evidence" value="ECO:0007669"/>
    <property type="project" value="UniProtKB-KW"/>
</dbReference>
<proteinExistence type="evidence at protein level"/>
<sequence length="53" mass="6228">RYIPYDQEDVKRQMVAAIGIEDKNTVTRANYYTLDLXIDTVTPDVNRNELKEK</sequence>
<keyword id="KW-0106">Calcium</keyword>
<keyword id="KW-1217">Cell adhesion impairing toxin</keyword>
<keyword id="KW-0903">Direct protein sequencing</keyword>
<keyword id="KW-1015">Disulfide bond</keyword>
<keyword id="KW-1206">Fibrinogenolytic toxin</keyword>
<keyword id="KW-0325">Glycoprotein</keyword>
<keyword id="KW-1199">Hemostasis impairing toxin</keyword>
<keyword id="KW-0378">Hydrolase</keyword>
<keyword id="KW-0479">Metal-binding</keyword>
<keyword id="KW-0482">Metalloprotease</keyword>
<keyword id="KW-1202">Platelet aggregation activating toxin</keyword>
<keyword id="KW-0645">Protease</keyword>
<keyword id="KW-0964">Secreted</keyword>
<keyword id="KW-0800">Toxin</keyword>
<keyword id="KW-0862">Zinc</keyword>
<comment type="function">
    <molecule>Zinc metalloproteinase-disintegrin-like alborhagin</molecule>
    <text evidence="2">Induces platelet activation and glycoprotein VI (GP6)-dependent platelet aggregation. Induces ectodomain cleavage of GP6 by activating endogenous platelet metalloproteinases (probably ADAM10). Has fibrinogenolytic activity against the alpha chain of fibrinogen (FGA). Recognizes distinct binding sites as convulxin, since alborhagin has minimal effect on convulxin binding to GPVI-expressing cells.</text>
</comment>
<comment type="function">
    <text evidence="2">Disintegrin alborhagin-C: 42 kDa fragment of alborhagin autoproteolysed that does not show platelet activation.</text>
</comment>
<comment type="cofactor">
    <cofactor evidence="1">
        <name>Zn(2+)</name>
        <dbReference type="ChEBI" id="CHEBI:29105"/>
    </cofactor>
    <text evidence="1">Binds 1 zinc ion per subunit.</text>
</comment>
<comment type="activity regulation">
    <text>Alborhagin-induced platelet aggregation, but not shape change, is inhibited by EDTA, suggesting that the platelet activation (shape change) is independent of divalent cation or metalloproteinase activity.</text>
</comment>
<comment type="subunit">
    <text>Monomer.</text>
</comment>
<comment type="subcellular location">
    <subcellularLocation>
        <location>Secreted</location>
    </subcellularLocation>
</comment>
<comment type="tissue specificity">
    <text>Expressed by the venom gland.</text>
</comment>
<comment type="PTM">
    <text evidence="1">Contains numerous disulfide bonds.</text>
</comment>
<comment type="PTM">
    <text evidence="1">Glycosylated.</text>
</comment>
<comment type="similarity">
    <text evidence="3">Belongs to the venom metalloproteinase (M12B) family. P-III subfamily. P-IIIb sub-subfamily.</text>
</comment>
<protein>
    <recommendedName>
        <fullName>Zinc metalloproteinase-disintegrin-like alborhagin</fullName>
        <ecNumber>3.4.24.-</ecNumber>
    </recommendedName>
    <alternativeName>
        <fullName>Snake venom metalloproteinase</fullName>
        <shortName>SVMP</shortName>
    </alternativeName>
    <component>
        <recommendedName>
            <fullName>Disintegrin-like alborhagin-C</fullName>
        </recommendedName>
    </component>
</protein>
<accession>P0DJH2</accession>
<reference key="1">
    <citation type="journal article" date="2001" name="J. Biol. Chem.">
        <title>A novel viper venom metalloproteinase, alborhagin, is an agonist at the platelet collagen receptor GPVI.</title>
        <authorList>
            <person name="Andrews R.K."/>
            <person name="Gardiner E.E."/>
            <person name="Asazuma N."/>
            <person name="Berlanga O."/>
            <person name="Tulasne D."/>
            <person name="Nieswandt B."/>
            <person name="Smith A.I."/>
            <person name="Berndt M.C."/>
            <person name="Watson S.P."/>
        </authorList>
    </citation>
    <scope>PROTEIN SEQUENCE</scope>
    <source>
        <tissue>Venom</tissue>
    </source>
</reference>
<reference key="2">
    <citation type="journal article" date="2007" name="Thromb. Haemost.">
        <title>Snake venom metalloproteinases, crotarhagin and alborhagin, induce ectodomain shedding of the platelet collagen receptor, glycoprotein VI.</title>
        <authorList>
            <person name="Wijeyewickrema L.C."/>
            <person name="Gardiner E.E."/>
            <person name="Moroi M."/>
            <person name="Berndt M.C."/>
            <person name="Andrews R.K."/>
        </authorList>
    </citation>
    <scope>FUNCTION</scope>
</reference>
<evidence type="ECO:0000250" key="1"/>
<evidence type="ECO:0000269" key="2">
    <source>
    </source>
</evidence>
<evidence type="ECO:0000305" key="3"/>
<feature type="chain" id="PRO_0000417321" description="Zinc metalloproteinase-disintegrin-like alborhagin">
    <location>
        <begin position="1" status="less than"/>
        <end position="53" status="greater than"/>
    </location>
</feature>
<feature type="chain" id="PRO_0000417322" description="Disintegrin-like alborhagin-C">
    <location>
        <begin position="37"/>
        <end position="53" status="greater than"/>
    </location>
</feature>
<feature type="unsure residue" description="Assigned by comparison with orthologs">
    <location>
        <position position="1"/>
    </location>
</feature>
<feature type="unsure residue" description="R or K">
    <location>
        <position position="12"/>
    </location>
</feature>
<feature type="unsure residue" description="Assigned by comparison with orthologs">
    <location>
        <position position="21"/>
    </location>
</feature>
<feature type="unsure residue" description="Assigned by comparison with orthologs">
    <location>
        <position position="23"/>
    </location>
</feature>
<feature type="non-consecutive residues" evidence="3">
    <location>
        <begin position="11"/>
        <end position="12"/>
    </location>
</feature>
<feature type="non-consecutive residues" evidence="3">
    <location>
        <begin position="22"/>
        <end position="23"/>
    </location>
</feature>
<feature type="non-consecutive residues" evidence="3">
    <location>
        <begin position="36"/>
        <end position="37"/>
    </location>
</feature>
<feature type="non-terminal residue">
    <location>
        <position position="1"/>
    </location>
</feature>
<feature type="non-terminal residue">
    <location>
        <position position="53"/>
    </location>
</feature>